<feature type="chain" id="PRO_0000068876" description="Rap guanine nucleotide exchange factor 6">
    <location>
        <begin position="1"/>
        <end position="1601"/>
    </location>
</feature>
<feature type="domain" description="N-terminal Ras-GEF" evidence="1">
    <location>
        <begin position="412"/>
        <end position="526"/>
    </location>
</feature>
<feature type="domain" description="PDZ" evidence="2 12">
    <location>
        <begin position="530"/>
        <end position="615"/>
    </location>
</feature>
<feature type="domain" description="Ras-associating" evidence="3">
    <location>
        <begin position="749"/>
        <end position="835"/>
    </location>
</feature>
<feature type="domain" description="Ras-GEF" evidence="4">
    <location>
        <begin position="860"/>
        <end position="1088"/>
    </location>
</feature>
<feature type="region of interest" description="Disordered" evidence="5">
    <location>
        <begin position="1"/>
        <end position="22"/>
    </location>
</feature>
<feature type="region of interest" description="Disordered" evidence="5">
    <location>
        <begin position="179"/>
        <end position="250"/>
    </location>
</feature>
<feature type="region of interest" description="Disordered" evidence="5">
    <location>
        <begin position="1192"/>
        <end position="1274"/>
    </location>
</feature>
<feature type="region of interest" description="Disordered" evidence="5">
    <location>
        <begin position="1302"/>
        <end position="1324"/>
    </location>
</feature>
<feature type="region of interest" description="Disordered" evidence="5">
    <location>
        <begin position="1455"/>
        <end position="1478"/>
    </location>
</feature>
<feature type="region of interest" description="Disordered" evidence="5">
    <location>
        <begin position="1571"/>
        <end position="1601"/>
    </location>
</feature>
<feature type="compositionally biased region" description="Low complexity" evidence="5">
    <location>
        <begin position="187"/>
        <end position="205"/>
    </location>
</feature>
<feature type="compositionally biased region" description="Acidic residues" evidence="5">
    <location>
        <begin position="228"/>
        <end position="241"/>
    </location>
</feature>
<feature type="compositionally biased region" description="Low complexity" evidence="5">
    <location>
        <begin position="1229"/>
        <end position="1238"/>
    </location>
</feature>
<feature type="compositionally biased region" description="Low complexity" evidence="5">
    <location>
        <begin position="1255"/>
        <end position="1274"/>
    </location>
</feature>
<feature type="compositionally biased region" description="Acidic residues" evidence="5">
    <location>
        <begin position="1586"/>
        <end position="1601"/>
    </location>
</feature>
<feature type="binding site">
    <location>
        <begin position="280"/>
        <end position="399"/>
    </location>
    <ligand>
        <name>a nucleoside 3',5'-cyclic phosphate</name>
        <dbReference type="ChEBI" id="CHEBI:58464"/>
    </ligand>
</feature>
<feature type="modified residue" description="N-acetylmethionine" evidence="14">
    <location>
        <position position="1"/>
    </location>
</feature>
<feature type="modified residue" description="Phosphoserine" evidence="15">
    <location>
        <position position="3"/>
    </location>
</feature>
<feature type="splice variant" id="VSP_050607" description="In isoform 3." evidence="9">
    <original>D</original>
    <variation>AVGFYY</variation>
    <location>
        <position position="747"/>
    </location>
</feature>
<feature type="splice variant" id="VSP_045027" description="In isoform 6." evidence="11">
    <location>
        <begin position="828"/>
        <end position="1601"/>
    </location>
</feature>
<feature type="splice variant" id="VSP_050608" description="In isoform 3, isoform 4 and isoform 5." evidence="9 11">
    <original>R</original>
    <variation>RKKRWRSLG</variation>
    <location>
        <position position="1067"/>
    </location>
</feature>
<feature type="splice variant" id="VSP_050610" description="In isoform 2." evidence="10">
    <original>GYTLIPSAKSDNLSDSSHSEISSRSSIVSNCSVDSMSAALQDERCSSQALAVPESTGALEKTEHASGIGDHSQHGPGWTLLKPSLIKCLAVSSSVSNEEISQEHIIIEAADSGRGSWTSCSSSSHDNFQSLPNPKSWDFLNSY</original>
    <variation>VGSIISDHSSKISGQSCPGIGGAYLQKKILQITRSTAKRTDSTEKATEENRDRTSCENTTRKRMTSPFRRLRERMLSRERLVNSQKEDTDHNQATESCEKVKDVGSNIKDEKGSAIFNSNSQGNSNTLNCFYTRFKSKRRKTL</variation>
    <location>
        <begin position="1249"/>
        <end position="1391"/>
    </location>
</feature>
<feature type="splice variant" id="VSP_050611" description="In isoform 2." evidence="10">
    <location>
        <begin position="1392"/>
        <end position="1601"/>
    </location>
</feature>
<feature type="splice variant" id="VSP_050609" description="In isoform 3 and isoform 5." evidence="9 11">
    <location>
        <begin position="1489"/>
        <end position="1593"/>
    </location>
</feature>
<feature type="sequence variant" id="VAR_057168" description="In dbSNP:rs3756293.">
    <original>S</original>
    <variation>A</variation>
    <location>
        <position position="570"/>
    </location>
</feature>
<feature type="sequence variant" id="VAR_057169" description="In dbSNP:rs34112735.">
    <original>A</original>
    <variation>P</variation>
    <location>
        <position position="594"/>
    </location>
</feature>
<feature type="sequence variant" id="VAR_057170" description="In dbSNP:rs7717835.">
    <original>I</original>
    <variation>V</variation>
    <location>
        <position position="1353"/>
    </location>
</feature>
<feature type="sequence variant" id="VAR_059793" description="In dbSNP:rs1291602." evidence="6 7 8">
    <original>Q</original>
    <variation>R</variation>
    <location>
        <position position="1452"/>
    </location>
</feature>
<feature type="sequence variant" id="VAR_057171" description="In dbSNP:rs1064539.">
    <original>V</original>
    <variation>E</variation>
    <location>
        <position position="1559"/>
    </location>
</feature>
<feature type="sequence conflict" description="In Ref. 1; AAL79915/AAL79916." evidence="12" ref="1">
    <original>K</original>
    <variation>E</variation>
    <location>
        <position position="566"/>
    </location>
</feature>
<feature type="sequence conflict" description="In Ref. 1; AAL79915/AAL79916." evidence="12" ref="1">
    <original>L</original>
    <variation>P</variation>
    <location>
        <position position="619"/>
    </location>
</feature>
<feature type="sequence conflict" description="In Ref. 1; AAL79915/AAL79916." evidence="12" ref="1">
    <original>E</original>
    <variation>K</variation>
    <location>
        <position position="637"/>
    </location>
</feature>
<feature type="sequence conflict" description="In Ref. 1; AAL79915/AAL79916." evidence="12" ref="1">
    <original>V</original>
    <variation>A</variation>
    <location>
        <position position="669"/>
    </location>
</feature>
<feature type="sequence conflict" description="In Ref. 5; AAI42965." evidence="12" ref="5">
    <original>P</original>
    <variation>A</variation>
    <location>
        <position position="749"/>
    </location>
</feature>
<feature type="helix" evidence="16">
    <location>
        <begin position="267"/>
        <end position="277"/>
    </location>
</feature>
<feature type="turn" evidence="16">
    <location>
        <begin position="280"/>
        <end position="282"/>
    </location>
</feature>
<feature type="helix" evidence="16">
    <location>
        <begin position="286"/>
        <end position="292"/>
    </location>
</feature>
<feature type="turn" evidence="16">
    <location>
        <begin position="293"/>
        <end position="295"/>
    </location>
</feature>
<feature type="strand" evidence="16">
    <location>
        <begin position="296"/>
        <end position="301"/>
    </location>
</feature>
<feature type="strand" evidence="16">
    <location>
        <begin position="303"/>
        <end position="305"/>
    </location>
</feature>
<feature type="strand" evidence="16">
    <location>
        <begin position="307"/>
        <end position="309"/>
    </location>
</feature>
<feature type="strand" evidence="16">
    <location>
        <begin position="317"/>
        <end position="320"/>
    </location>
</feature>
<feature type="strand" evidence="16">
    <location>
        <begin position="326"/>
        <end position="329"/>
    </location>
</feature>
<feature type="strand" evidence="16">
    <location>
        <begin position="331"/>
        <end position="333"/>
    </location>
</feature>
<feature type="strand" evidence="16">
    <location>
        <begin position="335"/>
        <end position="338"/>
    </location>
</feature>
<feature type="strand" evidence="16">
    <location>
        <begin position="343"/>
        <end position="345"/>
    </location>
</feature>
<feature type="strand" evidence="16">
    <location>
        <begin position="348"/>
        <end position="350"/>
    </location>
</feature>
<feature type="strand" evidence="16">
    <location>
        <begin position="357"/>
        <end position="372"/>
    </location>
</feature>
<feature type="helix" evidence="16">
    <location>
        <begin position="373"/>
        <end position="379"/>
    </location>
</feature>
<feature type="strand" evidence="17">
    <location>
        <begin position="1598"/>
        <end position="1601"/>
    </location>
</feature>
<proteinExistence type="evidence at protein level"/>
<comment type="function">
    <text evidence="6 7">Guanine nucleotide exchange factor (GEF) for Rap1A, Rap2A and M-Ras GTPases. Does not interact with cAMP.</text>
</comment>
<comment type="subunit">
    <text evidence="8 12">Interacts with the second PDZ domain of human PTP1e.</text>
</comment>
<comment type="interaction">
    <interactant intactId="EBI-2693017">
        <id>Q8TEU7</id>
    </interactant>
    <interactant intactId="EBI-355227">
        <id>Q12923</id>
        <label>PTPN13</label>
    </interactant>
    <organismsDiffer>false</organismsDiffer>
    <experiments>4</experiments>
</comment>
<comment type="subcellular location">
    <subcellularLocation>
        <location evidence="6">Cytoplasm</location>
    </subcellularLocation>
    <subcellularLocation>
        <location evidence="6">Cell membrane</location>
    </subcellularLocation>
    <text>Upon binding to M-Ras, it translocates to the plasma membrane.</text>
</comment>
<comment type="alternative products">
    <event type="alternative splicing"/>
    <isoform>
        <id>Q8TEU7-1</id>
        <name>1</name>
        <name evidence="7">PDZ-GEF2A</name>
        <sequence type="displayed"/>
    </isoform>
    <isoform>
        <id>Q8TEU7-2</id>
        <name>2</name>
        <name evidence="7">PDZ-GEF2B</name>
        <sequence type="described" ref="VSP_050610 VSP_050611"/>
    </isoform>
    <isoform>
        <id>Q8TEU7-3</id>
        <name>3</name>
        <sequence type="described" ref="VSP_050607 VSP_050608 VSP_050609"/>
    </isoform>
    <isoform>
        <id>Q8TEU7-4</id>
        <name>4</name>
        <sequence type="described" ref="VSP_050608"/>
    </isoform>
    <isoform>
        <id>Q8TEU7-5</id>
        <name>5</name>
        <sequence type="described" ref="VSP_050608 VSP_050609"/>
    </isoform>
    <isoform>
        <id>Q8TEU7-6</id>
        <name>6</name>
        <sequence type="described" ref="VSP_045027"/>
    </isoform>
</comment>
<comment type="tissue specificity">
    <text evidence="6">Isoform 3 has highest expression levels in the brain, heart, liver, lung and placenta and is barely detectable in skeletal muscle, kidney and pancreas.</text>
</comment>
<sequence>MNSPVDPGARQALRKKPPERTPEDLNTIYSYLHGMEILSNLREHQLRLMSARARYERYSGNQVLFCSETIARCWYILLSGSVLVKGSMVLPPCSFGKQFGGKRGCDCLVLEPSEMIVVENAKDNEDSILQREIPARQSRRRFRKINYKGERQTITDDVEVNSYLSLPADLTKMHLTENPHPQVTHVSSSQSGCSIASDSGSSSLSDIYQATESEVGDVDLTRLPEGPVDSEDDEEEDEEIDRTDPLQGRDLVRECLEKEPADKTDDDIEQLLEFMHQLPAFANMTMSVRRELCSVMIFEVVEQAGAIILEDGQELDSWYVILNGTVEISHPDGKVENLFMGNSFGITPTLDKQYMHGIVRTKVDDCQFVCIAQQDYWRILNHVEKNTHKVEEEGEIVMVHEHRELDRSGTRKGHIVIKATPERLIMHLIEEHSIVDPTYIEDFLLTYRTFLESPLDVGIKLLEWFKIDSLRDKVTRIVLLWVNNHFNDFEGDPAMTRFLEEFEKNLEDTKMNGHLRLLNIACAAKAKWRQVVLQKASRESPLQFSLNGGSEKGFGIFVEGVEPGSKAADSGLKRGDQIMEVNGQNFENITFMKAVEILRNNTHLALTVKTNIFVFKELLFRTEQEKSGVPHIPKIAEKKSNRHSIQHVPGDIEQTSQEKGSKKVKANTVSGGRNKIRKILDKTRFSILPPKLFSDGGLSQSQDDSIVGTRHCRHSLAIMPIPGTLSSSSPDLLQPTTSMLDFSNPSDIPDQVIRVFKVDQQSCYIIISKDTTAKEVVFHAVHEFGLTGASDTYSLCEVSVTPEGVIKQRRLPDQFSKLADRIQLNGRYYLKNNMETETLCSDEDAQELVKESQLSMLQLSTIEVATQLSMRDFDLFRNIEPTEYIDDLFKLNSKTGNTHLKRFEDIVNQETFWVASEILTEANQLKRMKIIKHFIKIALHCRECKNFNSMFAIISGLNLASVARLRGTWEKLPSKYEKHLQDLQDIFDPSRNMAKYRNILSSQSMQPPIIPLFPVVKKDMTFLHEGNDSKVDGLVNFEKLRMISKEIRQVVRMTSANMDPAMMFRQRSLSQGSTNSNMLDVQGGAHKKRARRSSLLNAKKLYEDAQMARKVKQYLSSLDVETDEEKFQMMSLQWEPAYGTLTKNLSEKRSAKSSEMSPVPMRSAGQTTKAHLHQPHRVSQVLQVPAVNLHPIRKKGQTKDPALNTSLPQKVLGTTEEISGKKHTEDTISVASSLHSSPPASPQGSPHKGYTLIPSAKSDNLSDSSHSEISSRSSIVSNCSVDSMSAALQDERCSSQALAVPESTGALEKTEHASGIGDHSQHGPGWTLLKPSLIKCLAVSSSVSNEEISQEHIIIEAADSGRGSWTSCSSSSHDNFQSLPNPKSWDFLNSYRHTHLDDPIAEVEPTDSEPYSCSKSCSRTCGQCKGSLERKSWTSSSSLSDTYEPNYGTVKQRVLESTPAESSEGLDPKDATDPVYKTVTSSTEKGLIVYCVTSPKKDDRYREPPPTPPGYLGISLADLKEGPHTHLKPPDYSVAVQRSKMMHNSLSRLPPASLSSNLVACVPSKIVTQPQRHNLQPFHPKLGDVTDADSEADENEQVSAV</sequence>
<keyword id="KW-0002">3D-structure</keyword>
<keyword id="KW-0007">Acetylation</keyword>
<keyword id="KW-0025">Alternative splicing</keyword>
<keyword id="KW-1003">Cell membrane</keyword>
<keyword id="KW-0963">Cytoplasm</keyword>
<keyword id="KW-0344">Guanine-nucleotide releasing factor</keyword>
<keyword id="KW-0472">Membrane</keyword>
<keyword id="KW-0597">Phosphoprotein</keyword>
<keyword id="KW-1267">Proteomics identification</keyword>
<keyword id="KW-1185">Reference proteome</keyword>
<name>RPGF6_HUMAN</name>
<accession>Q8TEU7</accession>
<accession>A3KN82</accession>
<accession>A5PLL6</accession>
<accession>B7ZML2</accession>
<accession>E9PDV7</accession>
<accession>Q8NI21</accession>
<accession>Q8TEU6</accession>
<accession>Q96PC1</accession>
<organism evidence="13">
    <name type="scientific">Homo sapiens</name>
    <name type="common">Human</name>
    <dbReference type="NCBI Taxonomy" id="9606"/>
    <lineage>
        <taxon>Eukaryota</taxon>
        <taxon>Metazoa</taxon>
        <taxon>Chordata</taxon>
        <taxon>Craniata</taxon>
        <taxon>Vertebrata</taxon>
        <taxon>Euteleostomi</taxon>
        <taxon>Mammalia</taxon>
        <taxon>Eutheria</taxon>
        <taxon>Euarchontoglires</taxon>
        <taxon>Primates</taxon>
        <taxon>Haplorrhini</taxon>
        <taxon>Catarrhini</taxon>
        <taxon>Hominidae</taxon>
        <taxon>Homo</taxon>
    </lineage>
</organism>
<gene>
    <name type="primary">RAPGEF6</name>
    <name type="synonym">PDZGEF2</name>
</gene>
<protein>
    <recommendedName>
        <fullName>Rap guanine nucleotide exchange factor 6</fullName>
    </recommendedName>
    <alternativeName>
        <fullName>PDZ domain-containing guanine nucleotide exchange factor 2</fullName>
        <shortName>PDZ-GEF2</shortName>
    </alternativeName>
    <alternativeName>
        <fullName>RA-GEF-2</fullName>
    </alternativeName>
</protein>
<evidence type="ECO:0000255" key="1">
    <source>
        <dbReference type="PROSITE-ProRule" id="PRU00135"/>
    </source>
</evidence>
<evidence type="ECO:0000255" key="2">
    <source>
        <dbReference type="PROSITE-ProRule" id="PRU00143"/>
    </source>
</evidence>
<evidence type="ECO:0000255" key="3">
    <source>
        <dbReference type="PROSITE-ProRule" id="PRU00166"/>
    </source>
</evidence>
<evidence type="ECO:0000255" key="4">
    <source>
        <dbReference type="PROSITE-ProRule" id="PRU00168"/>
    </source>
</evidence>
<evidence type="ECO:0000256" key="5">
    <source>
        <dbReference type="SAM" id="MobiDB-lite"/>
    </source>
</evidence>
<evidence type="ECO:0000269" key="6">
    <source>
    </source>
</evidence>
<evidence type="ECO:0000269" key="7">
    <source>
    </source>
</evidence>
<evidence type="ECO:0000269" key="8">
    <source ref="2"/>
</evidence>
<evidence type="ECO:0000303" key="9">
    <source>
    </source>
</evidence>
<evidence type="ECO:0000303" key="10">
    <source>
    </source>
</evidence>
<evidence type="ECO:0000303" key="11">
    <source>
    </source>
</evidence>
<evidence type="ECO:0000305" key="12"/>
<evidence type="ECO:0000312" key="13">
    <source>
        <dbReference type="EMBL" id="AAL79915.1"/>
    </source>
</evidence>
<evidence type="ECO:0007744" key="14">
    <source>
    </source>
</evidence>
<evidence type="ECO:0007744" key="15">
    <source>
    </source>
</evidence>
<evidence type="ECO:0007829" key="16">
    <source>
        <dbReference type="PDB" id="2D93"/>
    </source>
</evidence>
<evidence type="ECO:0007829" key="17">
    <source>
        <dbReference type="PDB" id="3LNY"/>
    </source>
</evidence>
<reference evidence="12" key="1">
    <citation type="journal article" date="2003" name="Biochim. Biophys. Acta">
        <title>Characterisation of PDZ-GEFs, a family of guanine nucleotide exchange factors specific for Rap1 and Rap2.</title>
        <authorList>
            <person name="Kuiperij H.B."/>
            <person name="de Rooij J."/>
            <person name="Rehmann H."/>
            <person name="van Triest M."/>
            <person name="Wittinghofer A."/>
            <person name="Bos J.L."/>
            <person name="Zwartkruis F.J.T."/>
        </authorList>
    </citation>
    <scope>NUCLEOTIDE SEQUENCE [MRNA] (ISOFORMS 1 AND 2)</scope>
    <scope>FUNCTION</scope>
    <scope>VARIANT ARG-1452</scope>
</reference>
<reference evidence="12" key="2">
    <citation type="submission" date="2002-01" db="EMBL/GenBank/DDBJ databases">
        <title>A PDZ domain containing guanine exchange factor (GEF) interacts with the second PDZ domain of human PTP1e.</title>
        <authorList>
            <person name="Banville D."/>
            <person name="Murthy K."/>
            <person name="Shen S."/>
            <person name="Clark K."/>
            <person name="Fortin Y."/>
        </authorList>
    </citation>
    <scope>NUCLEOTIDE SEQUENCE [MRNA] (ISOFORM 1)</scope>
    <scope>SUBUNIT</scope>
    <scope>VARIANT ARG-1452</scope>
</reference>
<reference evidence="12" key="3">
    <citation type="journal article" date="2001" name="J. Biol. Chem.">
        <title>Identification and characterization of RA-GEF-2, a Rap guanine nucleotide exchange factor that serves as a downstream target of M-Ras.</title>
        <authorList>
            <person name="Gao X."/>
            <person name="Satoh T."/>
            <person name="Liao Y."/>
            <person name="Song C."/>
            <person name="Hu C.-D."/>
            <person name="Kariya K."/>
            <person name="Kataoka T."/>
        </authorList>
    </citation>
    <scope>NUCLEOTIDE SEQUENCE [MRNA] (ISOFORM 3)</scope>
    <scope>FUNCTION</scope>
    <scope>SUBCELLULAR LOCATION</scope>
    <scope>TISSUE SPECIFICITY</scope>
    <scope>VARIANT ARG-1452</scope>
    <source>
        <tissue evidence="6">Fetal brain</tissue>
    </source>
</reference>
<reference key="4">
    <citation type="journal article" date="2004" name="Nature">
        <title>The DNA sequence and comparative analysis of human chromosome 5.</title>
        <authorList>
            <person name="Schmutz J."/>
            <person name="Martin J."/>
            <person name="Terry A."/>
            <person name="Couronne O."/>
            <person name="Grimwood J."/>
            <person name="Lowry S."/>
            <person name="Gordon L.A."/>
            <person name="Scott D."/>
            <person name="Xie G."/>
            <person name="Huang W."/>
            <person name="Hellsten U."/>
            <person name="Tran-Gyamfi M."/>
            <person name="She X."/>
            <person name="Prabhakar S."/>
            <person name="Aerts A."/>
            <person name="Altherr M."/>
            <person name="Bajorek E."/>
            <person name="Black S."/>
            <person name="Branscomb E."/>
            <person name="Caoile C."/>
            <person name="Challacombe J.F."/>
            <person name="Chan Y.M."/>
            <person name="Denys M."/>
            <person name="Detter J.C."/>
            <person name="Escobar J."/>
            <person name="Flowers D."/>
            <person name="Fotopulos D."/>
            <person name="Glavina T."/>
            <person name="Gomez M."/>
            <person name="Gonzales E."/>
            <person name="Goodstein D."/>
            <person name="Grigoriev I."/>
            <person name="Groza M."/>
            <person name="Hammon N."/>
            <person name="Hawkins T."/>
            <person name="Haydu L."/>
            <person name="Israni S."/>
            <person name="Jett J."/>
            <person name="Kadner K."/>
            <person name="Kimball H."/>
            <person name="Kobayashi A."/>
            <person name="Lopez F."/>
            <person name="Lou Y."/>
            <person name="Martinez D."/>
            <person name="Medina C."/>
            <person name="Morgan J."/>
            <person name="Nandkeshwar R."/>
            <person name="Noonan J.P."/>
            <person name="Pitluck S."/>
            <person name="Pollard M."/>
            <person name="Predki P."/>
            <person name="Priest J."/>
            <person name="Ramirez L."/>
            <person name="Retterer J."/>
            <person name="Rodriguez A."/>
            <person name="Rogers S."/>
            <person name="Salamov A."/>
            <person name="Salazar A."/>
            <person name="Thayer N."/>
            <person name="Tice H."/>
            <person name="Tsai M."/>
            <person name="Ustaszewska A."/>
            <person name="Vo N."/>
            <person name="Wheeler J."/>
            <person name="Wu K."/>
            <person name="Yang J."/>
            <person name="Dickson M."/>
            <person name="Cheng J.-F."/>
            <person name="Eichler E.E."/>
            <person name="Olsen A."/>
            <person name="Pennacchio L.A."/>
            <person name="Rokhsar D.S."/>
            <person name="Richardson P."/>
            <person name="Lucas S.M."/>
            <person name="Myers R.M."/>
            <person name="Rubin E.M."/>
        </authorList>
    </citation>
    <scope>NUCLEOTIDE SEQUENCE [LARGE SCALE GENOMIC DNA]</scope>
</reference>
<reference key="5">
    <citation type="journal article" date="2004" name="Genome Res.">
        <title>The status, quality, and expansion of the NIH full-length cDNA project: the Mammalian Gene Collection (MGC).</title>
        <authorList>
            <consortium name="The MGC Project Team"/>
        </authorList>
    </citation>
    <scope>NUCLEOTIDE SEQUENCE [LARGE SCALE MRNA] (ISOFORMS 4; 5 AND 6)</scope>
    <source>
        <tissue>Brain</tissue>
    </source>
</reference>
<reference key="6">
    <citation type="journal article" date="2012" name="Proc. Natl. Acad. Sci. U.S.A.">
        <title>N-terminal acetylome analyses and functional insights of the N-terminal acetyltransferase NatB.</title>
        <authorList>
            <person name="Van Damme P."/>
            <person name="Lasa M."/>
            <person name="Polevoda B."/>
            <person name="Gazquez C."/>
            <person name="Elosegui-Artola A."/>
            <person name="Kim D.S."/>
            <person name="De Juan-Pardo E."/>
            <person name="Demeyer K."/>
            <person name="Hole K."/>
            <person name="Larrea E."/>
            <person name="Timmerman E."/>
            <person name="Prieto J."/>
            <person name="Arnesen T."/>
            <person name="Sherman F."/>
            <person name="Gevaert K."/>
            <person name="Aldabe R."/>
        </authorList>
    </citation>
    <scope>ACETYLATION [LARGE SCALE ANALYSIS] AT MET-1</scope>
    <scope>IDENTIFICATION BY MASS SPECTROMETRY [LARGE SCALE ANALYSIS]</scope>
</reference>
<reference key="7">
    <citation type="journal article" date="2013" name="J. Proteome Res.">
        <title>Toward a comprehensive characterization of a human cancer cell phosphoproteome.</title>
        <authorList>
            <person name="Zhou H."/>
            <person name="Di Palma S."/>
            <person name="Preisinger C."/>
            <person name="Peng M."/>
            <person name="Polat A.N."/>
            <person name="Heck A.J."/>
            <person name="Mohammed S."/>
        </authorList>
    </citation>
    <scope>PHOSPHORYLATION [LARGE SCALE ANALYSIS] AT SER-3</scope>
    <scope>IDENTIFICATION BY MASS SPECTROMETRY [LARGE SCALE ANALYSIS]</scope>
    <source>
        <tissue>Erythroleukemia</tissue>
    </source>
</reference>
<reference evidence="12" key="8">
    <citation type="submission" date="2006-06" db="PDB data bank">
        <title>Solution structure of the cNMP-binding domain of human Rap guanine nucleotide exchange factor 6.</title>
        <authorList>
            <consortium name="RIKEN structural genomics initiative (RSGI)"/>
        </authorList>
    </citation>
    <scope>STRUCTURE BY NMR OF 265-386</scope>
</reference>
<dbReference type="EMBL" id="AF478468">
    <property type="protein sequence ID" value="AAL79915.1"/>
    <property type="molecule type" value="mRNA"/>
</dbReference>
<dbReference type="EMBL" id="AF478469">
    <property type="protein sequence ID" value="AAL79916.1"/>
    <property type="molecule type" value="mRNA"/>
</dbReference>
<dbReference type="EMBL" id="AF478567">
    <property type="protein sequence ID" value="AAM21637.1"/>
    <property type="molecule type" value="mRNA"/>
</dbReference>
<dbReference type="EMBL" id="AF394782">
    <property type="protein sequence ID" value="AAK83368.1"/>
    <property type="molecule type" value="mRNA"/>
</dbReference>
<dbReference type="EMBL" id="AC004227">
    <property type="status" value="NOT_ANNOTATED_CDS"/>
    <property type="molecule type" value="Genomic_DNA"/>
</dbReference>
<dbReference type="EMBL" id="AC004622">
    <property type="status" value="NOT_ANNOTATED_CDS"/>
    <property type="molecule type" value="Genomic_DNA"/>
</dbReference>
<dbReference type="EMBL" id="AC008497">
    <property type="status" value="NOT_ANNOTATED_CDS"/>
    <property type="molecule type" value="Genomic_DNA"/>
</dbReference>
<dbReference type="EMBL" id="AC008695">
    <property type="status" value="NOT_ANNOTATED_CDS"/>
    <property type="molecule type" value="Genomic_DNA"/>
</dbReference>
<dbReference type="EMBL" id="AC026754">
    <property type="status" value="NOT_ANNOTATED_CDS"/>
    <property type="molecule type" value="Genomic_DNA"/>
</dbReference>
<dbReference type="EMBL" id="BC133703">
    <property type="protein sequence ID" value="AAI33704.1"/>
    <property type="molecule type" value="mRNA"/>
</dbReference>
<dbReference type="EMBL" id="BC142964">
    <property type="protein sequence ID" value="AAI42965.1"/>
    <property type="molecule type" value="mRNA"/>
</dbReference>
<dbReference type="EMBL" id="BC144627">
    <property type="protein sequence ID" value="AAI44628.1"/>
    <property type="molecule type" value="mRNA"/>
</dbReference>
<dbReference type="CCDS" id="CCDS34225.1">
    <molecule id="Q8TEU7-1"/>
</dbReference>
<dbReference type="CCDS" id="CCDS54897.1">
    <molecule id="Q8TEU7-6"/>
</dbReference>
<dbReference type="CCDS" id="CCDS54898.1">
    <molecule id="Q8TEU7-2"/>
</dbReference>
<dbReference type="CCDS" id="CCDS54899.1">
    <molecule id="Q8TEU7-5"/>
</dbReference>
<dbReference type="CCDS" id="CCDS54900.1">
    <molecule id="Q8TEU7-4"/>
</dbReference>
<dbReference type="CCDS" id="CCDS54901.1">
    <molecule id="Q8TEU7-3"/>
</dbReference>
<dbReference type="RefSeq" id="NP_001157858.1">
    <molecule id="Q8TEU7-4"/>
    <property type="nucleotide sequence ID" value="NM_001164386.2"/>
</dbReference>
<dbReference type="RefSeq" id="NP_001157859.1">
    <molecule id="Q8TEU7-3"/>
    <property type="nucleotide sequence ID" value="NM_001164387.2"/>
</dbReference>
<dbReference type="RefSeq" id="NP_001157860.1">
    <molecule id="Q8TEU7-5"/>
    <property type="nucleotide sequence ID" value="NM_001164388.2"/>
</dbReference>
<dbReference type="RefSeq" id="NP_001157861.1">
    <molecule id="Q8TEU7-2"/>
    <property type="nucleotide sequence ID" value="NM_001164389.2"/>
</dbReference>
<dbReference type="RefSeq" id="NP_001157862.1">
    <molecule id="Q8TEU7-6"/>
    <property type="nucleotide sequence ID" value="NM_001164390.2"/>
</dbReference>
<dbReference type="RefSeq" id="NP_057424.3">
    <molecule id="Q8TEU7-1"/>
    <property type="nucleotide sequence ID" value="NM_016340.6"/>
</dbReference>
<dbReference type="PDB" id="2D93">
    <property type="method" value="NMR"/>
    <property type="chains" value="A=265-385"/>
</dbReference>
<dbReference type="PDB" id="3LNY">
    <property type="method" value="X-ray"/>
    <property type="resolution" value="1.30 A"/>
    <property type="chains" value="B=1596-1601"/>
</dbReference>
<dbReference type="PDBsum" id="2D93"/>
<dbReference type="PDBsum" id="3LNY"/>
<dbReference type="SMR" id="Q8TEU7"/>
<dbReference type="BioGRID" id="119705">
    <property type="interactions" value="83"/>
</dbReference>
<dbReference type="ELM" id="Q8TEU7"/>
<dbReference type="FunCoup" id="Q8TEU7">
    <property type="interactions" value="3332"/>
</dbReference>
<dbReference type="IntAct" id="Q8TEU7">
    <property type="interactions" value="44"/>
</dbReference>
<dbReference type="MINT" id="Q8TEU7"/>
<dbReference type="STRING" id="9606.ENSP00000296859"/>
<dbReference type="GlyGen" id="Q8TEU7">
    <property type="glycosylation" value="7 sites, 3 N-linked glycans (3 sites), 1 O-linked glycan (3 sites)"/>
</dbReference>
<dbReference type="iPTMnet" id="Q8TEU7"/>
<dbReference type="PhosphoSitePlus" id="Q8TEU7"/>
<dbReference type="BioMuta" id="RAPGEF6"/>
<dbReference type="DMDM" id="313104174"/>
<dbReference type="jPOST" id="Q8TEU7"/>
<dbReference type="MassIVE" id="Q8TEU7"/>
<dbReference type="PaxDb" id="9606-ENSP00000296859"/>
<dbReference type="PeptideAtlas" id="Q8TEU7"/>
<dbReference type="ProteomicsDB" id="19757"/>
<dbReference type="ProteomicsDB" id="74497">
    <molecule id="Q8TEU7-1"/>
</dbReference>
<dbReference type="ProteomicsDB" id="74498">
    <molecule id="Q8TEU7-2"/>
</dbReference>
<dbReference type="ProteomicsDB" id="74499">
    <molecule id="Q8TEU7-3"/>
</dbReference>
<dbReference type="ProteomicsDB" id="74500">
    <molecule id="Q8TEU7-4"/>
</dbReference>
<dbReference type="ProteomicsDB" id="74501">
    <molecule id="Q8TEU7-5"/>
</dbReference>
<dbReference type="Pumba" id="Q8TEU7"/>
<dbReference type="Antibodypedia" id="25867">
    <property type="antibodies" value="126 antibodies from 22 providers"/>
</dbReference>
<dbReference type="DNASU" id="51735"/>
<dbReference type="Ensembl" id="ENST00000296859.10">
    <molecule id="Q8TEU7-4"/>
    <property type="protein sequence ID" value="ENSP00000296859.6"/>
    <property type="gene ID" value="ENSG00000158987.22"/>
</dbReference>
<dbReference type="Ensembl" id="ENST00000308008.10">
    <molecule id="Q8TEU7-2"/>
    <property type="protein sequence ID" value="ENSP00000311419.6"/>
    <property type="gene ID" value="ENSG00000158987.22"/>
</dbReference>
<dbReference type="Ensembl" id="ENST00000507093.5">
    <molecule id="Q8TEU7-3"/>
    <property type="protein sequence ID" value="ENSP00000426081.2"/>
    <property type="gene ID" value="ENSG00000158987.22"/>
</dbReference>
<dbReference type="Ensembl" id="ENST00000509018.6">
    <molecule id="Q8TEU7-1"/>
    <property type="protein sequence ID" value="ENSP00000421684.1"/>
    <property type="gene ID" value="ENSG00000158987.22"/>
</dbReference>
<dbReference type="Ensembl" id="ENST00000510071.5">
    <molecule id="Q8TEU7-6"/>
    <property type="protein sequence ID" value="ENSP00000425389.1"/>
    <property type="gene ID" value="ENSG00000158987.22"/>
</dbReference>
<dbReference type="Ensembl" id="ENST00000627212.2">
    <molecule id="Q8TEU7-5"/>
    <property type="protein sequence ID" value="ENSP00000487439.1"/>
    <property type="gene ID" value="ENSG00000158987.22"/>
</dbReference>
<dbReference type="GeneID" id="51735"/>
<dbReference type="KEGG" id="hsa:51735"/>
<dbReference type="MANE-Select" id="ENST00000509018.6">
    <property type="protein sequence ID" value="ENSP00000421684.1"/>
    <property type="RefSeq nucleotide sequence ID" value="NM_016340.6"/>
    <property type="RefSeq protein sequence ID" value="NP_057424.3"/>
</dbReference>
<dbReference type="UCSC" id="uc003kvn.2">
    <molecule id="Q8TEU7-1"/>
    <property type="organism name" value="human"/>
</dbReference>
<dbReference type="AGR" id="HGNC:20655"/>
<dbReference type="CTD" id="51735"/>
<dbReference type="DisGeNET" id="51735"/>
<dbReference type="GeneCards" id="RAPGEF6"/>
<dbReference type="HGNC" id="HGNC:20655">
    <property type="gene designation" value="RAPGEF6"/>
</dbReference>
<dbReference type="HPA" id="ENSG00000158987">
    <property type="expression patterns" value="Low tissue specificity"/>
</dbReference>
<dbReference type="MIM" id="610499">
    <property type="type" value="gene"/>
</dbReference>
<dbReference type="neXtProt" id="NX_Q8TEU7"/>
<dbReference type="OpenTargets" id="ENSG00000158987"/>
<dbReference type="PharmGKB" id="PA134885793"/>
<dbReference type="VEuPathDB" id="HostDB:ENSG00000158987"/>
<dbReference type="eggNOG" id="KOG3542">
    <property type="taxonomic scope" value="Eukaryota"/>
</dbReference>
<dbReference type="GeneTree" id="ENSGT00940000158124"/>
<dbReference type="InParanoid" id="Q8TEU7"/>
<dbReference type="OMA" id="FRNFNSM"/>
<dbReference type="OrthoDB" id="546434at2759"/>
<dbReference type="PAN-GO" id="Q8TEU7">
    <property type="GO annotations" value="6 GO annotations based on evolutionary models"/>
</dbReference>
<dbReference type="PhylomeDB" id="Q8TEU7"/>
<dbReference type="TreeFam" id="TF313184"/>
<dbReference type="PathwayCommons" id="Q8TEU7"/>
<dbReference type="SignaLink" id="Q8TEU7"/>
<dbReference type="SIGNOR" id="Q8TEU7"/>
<dbReference type="BioGRID-ORCS" id="51735">
    <property type="hits" value="19 hits in 1153 CRISPR screens"/>
</dbReference>
<dbReference type="ChiTaRS" id="RAPGEF6">
    <property type="organism name" value="human"/>
</dbReference>
<dbReference type="EvolutionaryTrace" id="Q8TEU7"/>
<dbReference type="GeneWiki" id="RAPGEF6"/>
<dbReference type="GenomeRNAi" id="51735"/>
<dbReference type="Pharos" id="Q8TEU7">
    <property type="development level" value="Tbio"/>
</dbReference>
<dbReference type="PRO" id="PR:Q8TEU7"/>
<dbReference type="Proteomes" id="UP000005640">
    <property type="component" value="Chromosome 5"/>
</dbReference>
<dbReference type="RNAct" id="Q8TEU7">
    <property type="molecule type" value="protein"/>
</dbReference>
<dbReference type="Bgee" id="ENSG00000158987">
    <property type="expression patterns" value="Expressed in corpus callosum and 191 other cell types or tissues"/>
</dbReference>
<dbReference type="ExpressionAtlas" id="Q8TEU7">
    <property type="expression patterns" value="baseline and differential"/>
</dbReference>
<dbReference type="GO" id="GO:0016324">
    <property type="term" value="C:apical plasma membrane"/>
    <property type="evidence" value="ECO:0000314"/>
    <property type="project" value="UniProtKB"/>
</dbReference>
<dbReference type="GO" id="GO:0005813">
    <property type="term" value="C:centrosome"/>
    <property type="evidence" value="ECO:0000314"/>
    <property type="project" value="HPA"/>
</dbReference>
<dbReference type="GO" id="GO:0005829">
    <property type="term" value="C:cytosol"/>
    <property type="evidence" value="ECO:0000314"/>
    <property type="project" value="HPA"/>
</dbReference>
<dbReference type="GO" id="GO:0030139">
    <property type="term" value="C:endocytic vesicle"/>
    <property type="evidence" value="ECO:0000314"/>
    <property type="project" value="UniProtKB"/>
</dbReference>
<dbReference type="GO" id="GO:0005886">
    <property type="term" value="C:plasma membrane"/>
    <property type="evidence" value="ECO:0000314"/>
    <property type="project" value="UniProtKB"/>
</dbReference>
<dbReference type="GO" id="GO:0030742">
    <property type="term" value="F:GTP-dependent protein binding"/>
    <property type="evidence" value="ECO:0000314"/>
    <property type="project" value="UniProtKB"/>
</dbReference>
<dbReference type="GO" id="GO:0005085">
    <property type="term" value="F:guanyl-nucleotide exchange factor activity"/>
    <property type="evidence" value="ECO:0000314"/>
    <property type="project" value="UniProtKB"/>
</dbReference>
<dbReference type="GO" id="GO:0070300">
    <property type="term" value="F:phosphatidic acid binding"/>
    <property type="evidence" value="ECO:0000314"/>
    <property type="project" value="UniProtKB"/>
</dbReference>
<dbReference type="GO" id="GO:0031267">
    <property type="term" value="F:small GTPase binding"/>
    <property type="evidence" value="ECO:0000314"/>
    <property type="project" value="UniProtKB"/>
</dbReference>
<dbReference type="GO" id="GO:0030033">
    <property type="term" value="P:microvillus assembly"/>
    <property type="evidence" value="ECO:0000316"/>
    <property type="project" value="UniProtKB"/>
</dbReference>
<dbReference type="GO" id="GO:0043547">
    <property type="term" value="P:positive regulation of GTPase activity"/>
    <property type="evidence" value="ECO:0000315"/>
    <property type="project" value="UniProtKB"/>
</dbReference>
<dbReference type="GO" id="GO:0072659">
    <property type="term" value="P:protein localization to plasma membrane"/>
    <property type="evidence" value="ECO:0000315"/>
    <property type="project" value="UniProtKB"/>
</dbReference>
<dbReference type="GO" id="GO:0007265">
    <property type="term" value="P:Ras protein signal transduction"/>
    <property type="evidence" value="ECO:0000318"/>
    <property type="project" value="GO_Central"/>
</dbReference>
<dbReference type="GO" id="GO:0043087">
    <property type="term" value="P:regulation of GTPase activity"/>
    <property type="evidence" value="ECO:0000303"/>
    <property type="project" value="UniProtKB"/>
</dbReference>
<dbReference type="CDD" id="cd00038">
    <property type="entry name" value="CAP_ED"/>
    <property type="match status" value="1"/>
</dbReference>
<dbReference type="CDD" id="cd06755">
    <property type="entry name" value="PDZ_RapGEF2_RapGEF6-like"/>
    <property type="match status" value="1"/>
</dbReference>
<dbReference type="CDD" id="cd01785">
    <property type="entry name" value="RA_PDZ-GEF1"/>
    <property type="match status" value="1"/>
</dbReference>
<dbReference type="CDD" id="cd00155">
    <property type="entry name" value="RasGEF"/>
    <property type="match status" value="1"/>
</dbReference>
<dbReference type="CDD" id="cd06224">
    <property type="entry name" value="REM"/>
    <property type="match status" value="1"/>
</dbReference>
<dbReference type="FunFam" id="1.10.840.10:FF:000001">
    <property type="entry name" value="Rap guanine nucleotide exchange factor (GEF) 6"/>
    <property type="match status" value="1"/>
</dbReference>
<dbReference type="FunFam" id="2.30.42.10:FF:000024">
    <property type="entry name" value="rap guanine nucleotide exchange factor 2 isoform X1"/>
    <property type="match status" value="1"/>
</dbReference>
<dbReference type="FunFam" id="1.20.870.10:FF:000001">
    <property type="entry name" value="rap guanine nucleotide exchange factor 2 isoform X2"/>
    <property type="match status" value="1"/>
</dbReference>
<dbReference type="FunFam" id="2.60.120.10:FF:000019">
    <property type="entry name" value="rap guanine nucleotide exchange factor 6 isoform X1"/>
    <property type="match status" value="1"/>
</dbReference>
<dbReference type="FunFam" id="2.60.120.10:FF:000040">
    <property type="entry name" value="rap guanine nucleotide exchange factor 6 isoform X1"/>
    <property type="match status" value="1"/>
</dbReference>
<dbReference type="Gene3D" id="2.30.42.10">
    <property type="match status" value="1"/>
</dbReference>
<dbReference type="Gene3D" id="2.60.120.10">
    <property type="entry name" value="Jelly Rolls"/>
    <property type="match status" value="2"/>
</dbReference>
<dbReference type="Gene3D" id="1.10.840.10">
    <property type="entry name" value="Ras guanine-nucleotide exchange factors catalytic domain"/>
    <property type="match status" value="1"/>
</dbReference>
<dbReference type="Gene3D" id="1.20.870.10">
    <property type="entry name" value="Son of sevenless (SoS) protein Chain: S domain 1"/>
    <property type="match status" value="1"/>
</dbReference>
<dbReference type="InterPro" id="IPR000595">
    <property type="entry name" value="cNMP-bd_dom"/>
</dbReference>
<dbReference type="InterPro" id="IPR018490">
    <property type="entry name" value="cNMP-bd_dom_sf"/>
</dbReference>
<dbReference type="InterPro" id="IPR001478">
    <property type="entry name" value="PDZ"/>
</dbReference>
<dbReference type="InterPro" id="IPR036034">
    <property type="entry name" value="PDZ_sf"/>
</dbReference>
<dbReference type="InterPro" id="IPR000159">
    <property type="entry name" value="RA_dom"/>
</dbReference>
<dbReference type="InterPro" id="IPR000651">
    <property type="entry name" value="Ras-like_Gua-exchang_fac_N"/>
</dbReference>
<dbReference type="InterPro" id="IPR023578">
    <property type="entry name" value="Ras_GEF_dom_sf"/>
</dbReference>
<dbReference type="InterPro" id="IPR001895">
    <property type="entry name" value="RASGEF_cat_dom"/>
</dbReference>
<dbReference type="InterPro" id="IPR036964">
    <property type="entry name" value="RASGEF_cat_dom_sf"/>
</dbReference>
<dbReference type="InterPro" id="IPR014710">
    <property type="entry name" value="RmlC-like_jellyroll"/>
</dbReference>
<dbReference type="PANTHER" id="PTHR45161">
    <property type="entry name" value="CYTOSKELETON-ASSOCIATED PROTEIN 4"/>
    <property type="match status" value="1"/>
</dbReference>
<dbReference type="PANTHER" id="PTHR45161:SF4">
    <property type="entry name" value="RAP GUANINE NUCLEOTIDE EXCHANGE FACTOR 6"/>
    <property type="match status" value="1"/>
</dbReference>
<dbReference type="Pfam" id="PF00027">
    <property type="entry name" value="cNMP_binding"/>
    <property type="match status" value="1"/>
</dbReference>
<dbReference type="Pfam" id="PF00595">
    <property type="entry name" value="PDZ"/>
    <property type="match status" value="1"/>
</dbReference>
<dbReference type="Pfam" id="PF00788">
    <property type="entry name" value="RA"/>
    <property type="match status" value="1"/>
</dbReference>
<dbReference type="Pfam" id="PF00617">
    <property type="entry name" value="RasGEF"/>
    <property type="match status" value="1"/>
</dbReference>
<dbReference type="Pfam" id="PF00618">
    <property type="entry name" value="RasGEF_N"/>
    <property type="match status" value="1"/>
</dbReference>
<dbReference type="SMART" id="SM00100">
    <property type="entry name" value="cNMP"/>
    <property type="match status" value="1"/>
</dbReference>
<dbReference type="SMART" id="SM00228">
    <property type="entry name" value="PDZ"/>
    <property type="match status" value="1"/>
</dbReference>
<dbReference type="SMART" id="SM00314">
    <property type="entry name" value="RA"/>
    <property type="match status" value="1"/>
</dbReference>
<dbReference type="SMART" id="SM00147">
    <property type="entry name" value="RasGEF"/>
    <property type="match status" value="1"/>
</dbReference>
<dbReference type="SMART" id="SM00229">
    <property type="entry name" value="RasGEFN"/>
    <property type="match status" value="1"/>
</dbReference>
<dbReference type="SUPFAM" id="SSF51206">
    <property type="entry name" value="cAMP-binding domain-like"/>
    <property type="match status" value="2"/>
</dbReference>
<dbReference type="SUPFAM" id="SSF50156">
    <property type="entry name" value="PDZ domain-like"/>
    <property type="match status" value="1"/>
</dbReference>
<dbReference type="SUPFAM" id="SSF48366">
    <property type="entry name" value="Ras GEF"/>
    <property type="match status" value="1"/>
</dbReference>
<dbReference type="PROSITE" id="PS50042">
    <property type="entry name" value="CNMP_BINDING_3"/>
    <property type="match status" value="1"/>
</dbReference>
<dbReference type="PROSITE" id="PS50106">
    <property type="entry name" value="PDZ"/>
    <property type="match status" value="1"/>
</dbReference>
<dbReference type="PROSITE" id="PS50200">
    <property type="entry name" value="RA"/>
    <property type="match status" value="1"/>
</dbReference>
<dbReference type="PROSITE" id="PS50009">
    <property type="entry name" value="RASGEF_CAT"/>
    <property type="match status" value="1"/>
</dbReference>
<dbReference type="PROSITE" id="PS50212">
    <property type="entry name" value="RASGEF_NTER"/>
    <property type="match status" value="1"/>
</dbReference>